<keyword id="KW-0443">Lipid metabolism</keyword>
<keyword id="KW-0521">NADP</keyword>
<keyword id="KW-0560">Oxidoreductase</keyword>
<keyword id="KW-1185">Reference proteome</keyword>
<keyword id="KW-0716">Sensory transduction</keyword>
<keyword id="KW-0844">Vision</keyword>
<feature type="chain" id="PRO_0000054767" description="Retinol dehydrogenase 12">
    <location>
        <begin position="1"/>
        <end position="316"/>
    </location>
</feature>
<feature type="active site" description="Proton acceptor" evidence="1">
    <location>
        <position position="200"/>
    </location>
</feature>
<feature type="binding site" evidence="1">
    <location>
        <begin position="46"/>
        <end position="52"/>
    </location>
    <ligand>
        <name>NADP(+)</name>
        <dbReference type="ChEBI" id="CHEBI:58349"/>
    </ligand>
</feature>
<feature type="binding site" evidence="1">
    <location>
        <position position="175"/>
    </location>
    <ligand>
        <name>substrate</name>
    </ligand>
</feature>
<feature type="sequence conflict" description="In Ref. 2; AAH16204." evidence="7" ref="2">
    <location>
        <begin position="114"/>
        <end position="125"/>
    </location>
</feature>
<feature type="sequence conflict" description="In Ref. 1; BAB32258." evidence="7" ref="1">
    <original>H</original>
    <variation>D</variation>
    <location>
        <position position="120"/>
    </location>
</feature>
<evidence type="ECO:0000250" key="1"/>
<evidence type="ECO:0000250" key="2">
    <source>
        <dbReference type="UniProtKB" id="Q96NR8"/>
    </source>
</evidence>
<evidence type="ECO:0000269" key="3">
    <source>
    </source>
</evidence>
<evidence type="ECO:0000269" key="4">
    <source>
    </source>
</evidence>
<evidence type="ECO:0000269" key="5">
    <source>
    </source>
</evidence>
<evidence type="ECO:0000269" key="6">
    <source>
    </source>
</evidence>
<evidence type="ECO:0000305" key="7"/>
<proteinExistence type="evidence at transcript level"/>
<gene>
    <name type="primary">Rdh12</name>
</gene>
<name>RDH12_MOUSE</name>
<organism>
    <name type="scientific">Mus musculus</name>
    <name type="common">Mouse</name>
    <dbReference type="NCBI Taxonomy" id="10090"/>
    <lineage>
        <taxon>Eukaryota</taxon>
        <taxon>Metazoa</taxon>
        <taxon>Chordata</taxon>
        <taxon>Craniata</taxon>
        <taxon>Vertebrata</taxon>
        <taxon>Euteleostomi</taxon>
        <taxon>Mammalia</taxon>
        <taxon>Eutheria</taxon>
        <taxon>Euarchontoglires</taxon>
        <taxon>Glires</taxon>
        <taxon>Rodentia</taxon>
        <taxon>Myomorpha</taxon>
        <taxon>Muroidea</taxon>
        <taxon>Muridae</taxon>
        <taxon>Murinae</taxon>
        <taxon>Mus</taxon>
        <taxon>Mus</taxon>
    </lineage>
</organism>
<dbReference type="EC" id="1.1.1.300" evidence="2"/>
<dbReference type="EMBL" id="AK020927">
    <property type="protein sequence ID" value="BAB32258.1"/>
    <property type="molecule type" value="mRNA"/>
</dbReference>
<dbReference type="EMBL" id="AK039233">
    <property type="protein sequence ID" value="BAC30288.1"/>
    <property type="molecule type" value="mRNA"/>
</dbReference>
<dbReference type="EMBL" id="BC016204">
    <property type="protein sequence ID" value="AAH16204.1"/>
    <property type="molecule type" value="mRNA"/>
</dbReference>
<dbReference type="CCDS" id="CCDS26009.1"/>
<dbReference type="RefSeq" id="NP_001300900.1">
    <property type="nucleotide sequence ID" value="NM_001313971.1"/>
</dbReference>
<dbReference type="RefSeq" id="NP_084293.1">
    <property type="nucleotide sequence ID" value="NM_030017.4"/>
</dbReference>
<dbReference type="SMR" id="Q8BYK4"/>
<dbReference type="BioGRID" id="219061">
    <property type="interactions" value="1"/>
</dbReference>
<dbReference type="FunCoup" id="Q8BYK4">
    <property type="interactions" value="239"/>
</dbReference>
<dbReference type="STRING" id="10090.ENSMUSP00000021548"/>
<dbReference type="PhosphoSitePlus" id="Q8BYK4"/>
<dbReference type="SwissPalm" id="Q8BYK4"/>
<dbReference type="jPOST" id="Q8BYK4"/>
<dbReference type="PaxDb" id="10090-ENSMUSP00000021548"/>
<dbReference type="PeptideAtlas" id="Q8BYK4"/>
<dbReference type="ProteomicsDB" id="255139"/>
<dbReference type="Pumba" id="Q8BYK4"/>
<dbReference type="Antibodypedia" id="24894">
    <property type="antibodies" value="97 antibodies from 18 providers"/>
</dbReference>
<dbReference type="DNASU" id="77974"/>
<dbReference type="Ensembl" id="ENSMUST00000021548.12">
    <property type="protein sequence ID" value="ENSMUSP00000021548.6"/>
    <property type="gene ID" value="ENSMUSG00000021123.13"/>
</dbReference>
<dbReference type="GeneID" id="77974"/>
<dbReference type="KEGG" id="mmu:77974"/>
<dbReference type="UCSC" id="uc007oac.1">
    <property type="organism name" value="mouse"/>
</dbReference>
<dbReference type="AGR" id="MGI:1925224"/>
<dbReference type="CTD" id="145226"/>
<dbReference type="MGI" id="MGI:1925224">
    <property type="gene designation" value="Rdh12"/>
</dbReference>
<dbReference type="VEuPathDB" id="HostDB:ENSMUSG00000021123"/>
<dbReference type="eggNOG" id="KOG1208">
    <property type="taxonomic scope" value="Eukaryota"/>
</dbReference>
<dbReference type="GeneTree" id="ENSGT00940000161505"/>
<dbReference type="HOGENOM" id="CLU_010194_44_5_1"/>
<dbReference type="InParanoid" id="Q8BYK4"/>
<dbReference type="OMA" id="SDCKKTW"/>
<dbReference type="OrthoDB" id="191139at2759"/>
<dbReference type="PhylomeDB" id="Q8BYK4"/>
<dbReference type="TreeFam" id="TF105429"/>
<dbReference type="BRENDA" id="1.1.1.300">
    <property type="organism ID" value="3474"/>
</dbReference>
<dbReference type="Reactome" id="R-MMU-2453902">
    <property type="pathway name" value="The canonical retinoid cycle in rods (twilight vision)"/>
</dbReference>
<dbReference type="UniPathway" id="UPA00912"/>
<dbReference type="BioGRID-ORCS" id="77974">
    <property type="hits" value="2 hits in 81 CRISPR screens"/>
</dbReference>
<dbReference type="ChiTaRS" id="Rdh12">
    <property type="organism name" value="mouse"/>
</dbReference>
<dbReference type="PRO" id="PR:Q8BYK4"/>
<dbReference type="Proteomes" id="UP000000589">
    <property type="component" value="Chromosome 12"/>
</dbReference>
<dbReference type="RNAct" id="Q8BYK4">
    <property type="molecule type" value="protein"/>
</dbReference>
<dbReference type="Bgee" id="ENSMUSG00000021123">
    <property type="expression patterns" value="Expressed in retinal neural layer and 96 other cell types or tissues"/>
</dbReference>
<dbReference type="ExpressionAtlas" id="Q8BYK4">
    <property type="expression patterns" value="baseline and differential"/>
</dbReference>
<dbReference type="GO" id="GO:0001917">
    <property type="term" value="C:photoreceptor inner segment"/>
    <property type="evidence" value="ECO:0000314"/>
    <property type="project" value="UniProtKB"/>
</dbReference>
<dbReference type="GO" id="GO:0102354">
    <property type="term" value="F:11-cis-retinol dehydrogenase activity"/>
    <property type="evidence" value="ECO:0007669"/>
    <property type="project" value="RHEA"/>
</dbReference>
<dbReference type="GO" id="GO:0004745">
    <property type="term" value="F:all-trans-retinol dehydrogenase (NAD+) activity"/>
    <property type="evidence" value="ECO:0000314"/>
    <property type="project" value="UniProtKB"/>
</dbReference>
<dbReference type="GO" id="GO:0052650">
    <property type="term" value="F:all-trans-retinol dehydrogenase (NADP+) activity"/>
    <property type="evidence" value="ECO:0000250"/>
    <property type="project" value="UniProtKB"/>
</dbReference>
<dbReference type="GO" id="GO:0110095">
    <property type="term" value="P:cellular detoxification of aldehyde"/>
    <property type="evidence" value="ECO:0000314"/>
    <property type="project" value="UniProtKB"/>
</dbReference>
<dbReference type="GO" id="GO:0042572">
    <property type="term" value="P:retinol metabolic process"/>
    <property type="evidence" value="ECO:0000314"/>
    <property type="project" value="UniProtKB"/>
</dbReference>
<dbReference type="GO" id="GO:0007601">
    <property type="term" value="P:visual perception"/>
    <property type="evidence" value="ECO:0000315"/>
    <property type="project" value="UniProtKB"/>
</dbReference>
<dbReference type="FunFam" id="3.40.50.720:FF:000145">
    <property type="entry name" value="Retinol dehydrogenase 12"/>
    <property type="match status" value="1"/>
</dbReference>
<dbReference type="Gene3D" id="3.40.50.720">
    <property type="entry name" value="NAD(P)-binding Rossmann-like Domain"/>
    <property type="match status" value="1"/>
</dbReference>
<dbReference type="InterPro" id="IPR036291">
    <property type="entry name" value="NAD(P)-bd_dom_sf"/>
</dbReference>
<dbReference type="InterPro" id="IPR002347">
    <property type="entry name" value="SDR_fam"/>
</dbReference>
<dbReference type="NCBIfam" id="NF004846">
    <property type="entry name" value="PRK06197.1"/>
    <property type="match status" value="1"/>
</dbReference>
<dbReference type="PANTHER" id="PTHR43157">
    <property type="entry name" value="PHOSPHATIDYLINOSITOL-GLYCAN BIOSYNTHESIS CLASS F PROTEIN-RELATED"/>
    <property type="match status" value="1"/>
</dbReference>
<dbReference type="PANTHER" id="PTHR43157:SF32">
    <property type="entry name" value="RETINOL DEHYDROGENASE 12"/>
    <property type="match status" value="1"/>
</dbReference>
<dbReference type="Pfam" id="PF00106">
    <property type="entry name" value="adh_short"/>
    <property type="match status" value="1"/>
</dbReference>
<dbReference type="PRINTS" id="PR00081">
    <property type="entry name" value="GDHRDH"/>
</dbReference>
<dbReference type="PRINTS" id="PR00080">
    <property type="entry name" value="SDRFAMILY"/>
</dbReference>
<dbReference type="SUPFAM" id="SSF51735">
    <property type="entry name" value="NAD(P)-binding Rossmann-fold domains"/>
    <property type="match status" value="1"/>
</dbReference>
<protein>
    <recommendedName>
        <fullName>Retinol dehydrogenase 12</fullName>
        <ecNumber evidence="2">1.1.1.300</ecNumber>
    </recommendedName>
</protein>
<reference key="1">
    <citation type="journal article" date="2005" name="Science">
        <title>The transcriptional landscape of the mammalian genome.</title>
        <authorList>
            <person name="Carninci P."/>
            <person name="Kasukawa T."/>
            <person name="Katayama S."/>
            <person name="Gough J."/>
            <person name="Frith M.C."/>
            <person name="Maeda N."/>
            <person name="Oyama R."/>
            <person name="Ravasi T."/>
            <person name="Lenhard B."/>
            <person name="Wells C."/>
            <person name="Kodzius R."/>
            <person name="Shimokawa K."/>
            <person name="Bajic V.B."/>
            <person name="Brenner S.E."/>
            <person name="Batalov S."/>
            <person name="Forrest A.R."/>
            <person name="Zavolan M."/>
            <person name="Davis M.J."/>
            <person name="Wilming L.G."/>
            <person name="Aidinis V."/>
            <person name="Allen J.E."/>
            <person name="Ambesi-Impiombato A."/>
            <person name="Apweiler R."/>
            <person name="Aturaliya R.N."/>
            <person name="Bailey T.L."/>
            <person name="Bansal M."/>
            <person name="Baxter L."/>
            <person name="Beisel K.W."/>
            <person name="Bersano T."/>
            <person name="Bono H."/>
            <person name="Chalk A.M."/>
            <person name="Chiu K.P."/>
            <person name="Choudhary V."/>
            <person name="Christoffels A."/>
            <person name="Clutterbuck D.R."/>
            <person name="Crowe M.L."/>
            <person name="Dalla E."/>
            <person name="Dalrymple B.P."/>
            <person name="de Bono B."/>
            <person name="Della Gatta G."/>
            <person name="di Bernardo D."/>
            <person name="Down T."/>
            <person name="Engstrom P."/>
            <person name="Fagiolini M."/>
            <person name="Faulkner G."/>
            <person name="Fletcher C.F."/>
            <person name="Fukushima T."/>
            <person name="Furuno M."/>
            <person name="Futaki S."/>
            <person name="Gariboldi M."/>
            <person name="Georgii-Hemming P."/>
            <person name="Gingeras T.R."/>
            <person name="Gojobori T."/>
            <person name="Green R.E."/>
            <person name="Gustincich S."/>
            <person name="Harbers M."/>
            <person name="Hayashi Y."/>
            <person name="Hensch T.K."/>
            <person name="Hirokawa N."/>
            <person name="Hill D."/>
            <person name="Huminiecki L."/>
            <person name="Iacono M."/>
            <person name="Ikeo K."/>
            <person name="Iwama A."/>
            <person name="Ishikawa T."/>
            <person name="Jakt M."/>
            <person name="Kanapin A."/>
            <person name="Katoh M."/>
            <person name="Kawasawa Y."/>
            <person name="Kelso J."/>
            <person name="Kitamura H."/>
            <person name="Kitano H."/>
            <person name="Kollias G."/>
            <person name="Krishnan S.P."/>
            <person name="Kruger A."/>
            <person name="Kummerfeld S.K."/>
            <person name="Kurochkin I.V."/>
            <person name="Lareau L.F."/>
            <person name="Lazarevic D."/>
            <person name="Lipovich L."/>
            <person name="Liu J."/>
            <person name="Liuni S."/>
            <person name="McWilliam S."/>
            <person name="Madan Babu M."/>
            <person name="Madera M."/>
            <person name="Marchionni L."/>
            <person name="Matsuda H."/>
            <person name="Matsuzawa S."/>
            <person name="Miki H."/>
            <person name="Mignone F."/>
            <person name="Miyake S."/>
            <person name="Morris K."/>
            <person name="Mottagui-Tabar S."/>
            <person name="Mulder N."/>
            <person name="Nakano N."/>
            <person name="Nakauchi H."/>
            <person name="Ng P."/>
            <person name="Nilsson R."/>
            <person name="Nishiguchi S."/>
            <person name="Nishikawa S."/>
            <person name="Nori F."/>
            <person name="Ohara O."/>
            <person name="Okazaki Y."/>
            <person name="Orlando V."/>
            <person name="Pang K.C."/>
            <person name="Pavan W.J."/>
            <person name="Pavesi G."/>
            <person name="Pesole G."/>
            <person name="Petrovsky N."/>
            <person name="Piazza S."/>
            <person name="Reed J."/>
            <person name="Reid J.F."/>
            <person name="Ring B.Z."/>
            <person name="Ringwald M."/>
            <person name="Rost B."/>
            <person name="Ruan Y."/>
            <person name="Salzberg S.L."/>
            <person name="Sandelin A."/>
            <person name="Schneider C."/>
            <person name="Schoenbach C."/>
            <person name="Sekiguchi K."/>
            <person name="Semple C.A."/>
            <person name="Seno S."/>
            <person name="Sessa L."/>
            <person name="Sheng Y."/>
            <person name="Shibata Y."/>
            <person name="Shimada H."/>
            <person name="Shimada K."/>
            <person name="Silva D."/>
            <person name="Sinclair B."/>
            <person name="Sperling S."/>
            <person name="Stupka E."/>
            <person name="Sugiura K."/>
            <person name="Sultana R."/>
            <person name="Takenaka Y."/>
            <person name="Taki K."/>
            <person name="Tammoja K."/>
            <person name="Tan S.L."/>
            <person name="Tang S."/>
            <person name="Taylor M.S."/>
            <person name="Tegner J."/>
            <person name="Teichmann S.A."/>
            <person name="Ueda H.R."/>
            <person name="van Nimwegen E."/>
            <person name="Verardo R."/>
            <person name="Wei C.L."/>
            <person name="Yagi K."/>
            <person name="Yamanishi H."/>
            <person name="Zabarovsky E."/>
            <person name="Zhu S."/>
            <person name="Zimmer A."/>
            <person name="Hide W."/>
            <person name="Bult C."/>
            <person name="Grimmond S.M."/>
            <person name="Teasdale R.D."/>
            <person name="Liu E.T."/>
            <person name="Brusic V."/>
            <person name="Quackenbush J."/>
            <person name="Wahlestedt C."/>
            <person name="Mattick J.S."/>
            <person name="Hume D.A."/>
            <person name="Kai C."/>
            <person name="Sasaki D."/>
            <person name="Tomaru Y."/>
            <person name="Fukuda S."/>
            <person name="Kanamori-Katayama M."/>
            <person name="Suzuki M."/>
            <person name="Aoki J."/>
            <person name="Arakawa T."/>
            <person name="Iida J."/>
            <person name="Imamura K."/>
            <person name="Itoh M."/>
            <person name="Kato T."/>
            <person name="Kawaji H."/>
            <person name="Kawagashira N."/>
            <person name="Kawashima T."/>
            <person name="Kojima M."/>
            <person name="Kondo S."/>
            <person name="Konno H."/>
            <person name="Nakano K."/>
            <person name="Ninomiya N."/>
            <person name="Nishio T."/>
            <person name="Okada M."/>
            <person name="Plessy C."/>
            <person name="Shibata K."/>
            <person name="Shiraki T."/>
            <person name="Suzuki S."/>
            <person name="Tagami M."/>
            <person name="Waki K."/>
            <person name="Watahiki A."/>
            <person name="Okamura-Oho Y."/>
            <person name="Suzuki H."/>
            <person name="Kawai J."/>
            <person name="Hayashizaki Y."/>
        </authorList>
    </citation>
    <scope>NUCLEOTIDE SEQUENCE [LARGE SCALE MRNA]</scope>
    <source>
        <strain>C57BL/6J</strain>
        <tissue>Spinal cord</tissue>
    </source>
</reference>
<reference key="2">
    <citation type="journal article" date="2004" name="Genome Res.">
        <title>The status, quality, and expansion of the NIH full-length cDNA project: the Mammalian Gene Collection (MGC).</title>
        <authorList>
            <consortium name="The MGC Project Team"/>
        </authorList>
    </citation>
    <scope>NUCLEOTIDE SEQUENCE [LARGE SCALE MRNA]</scope>
    <source>
        <tissue>Retina</tissue>
    </source>
</reference>
<reference key="3">
    <citation type="journal article" date="2002" name="J. Biol. Chem.">
        <title>Dual-substrate specificity short chain retinol dehydrogenases from the vertebrate retina.</title>
        <authorList>
            <person name="Haeseleer F."/>
            <person name="Jang G.-F."/>
            <person name="Imanishi Y."/>
            <person name="Driessen C.A.G.G."/>
            <person name="Matsumura M."/>
            <person name="Nelson P.S."/>
            <person name="Palczewski K."/>
        </authorList>
    </citation>
    <scope>TISSUE SPECIFICITY</scope>
</reference>
<reference key="4">
    <citation type="journal article" date="2006" name="J. Biol. Chem.">
        <title>Retinol dehydrogenase (RDH12) protects photoreceptors from light-induced degeneration in mice.</title>
        <authorList>
            <person name="Maeda A."/>
            <person name="Maeda T."/>
            <person name="Imanishi Y."/>
            <person name="Sun W."/>
            <person name="Jastrzebska B."/>
            <person name="Hatala D.A."/>
            <person name="Winkens H.J."/>
            <person name="Hofmann K.P."/>
            <person name="Janssen J.J."/>
            <person name="Baehr W."/>
            <person name="Driessen C.A."/>
            <person name="Palczewski K."/>
        </authorList>
    </citation>
    <scope>DISRUPTION PHENOTYPE</scope>
    <scope>TISSUE SPECIFICITY</scope>
    <scope>FUNCTION</scope>
</reference>
<reference key="5">
    <citation type="journal article" date="2010" name="Free Radic. Biol. Med.">
        <title>Retinol dehydrogenase 12 detoxifies 4-hydroxynonenal in photoreceptor cells.</title>
        <authorList>
            <person name="Marchette L.D."/>
            <person name="Thompson D.A."/>
            <person name="Kravtsova M."/>
            <person name="Ngansop T.N."/>
            <person name="Mandal M.N."/>
            <person name="Kasus-Jacobi A."/>
        </authorList>
    </citation>
    <scope>FUNCTION</scope>
</reference>
<reference key="6">
    <citation type="journal article" date="2012" name="J. Biol. Chem.">
        <title>Reduction of all-trans-retinal in vertebrate rod photoreceptors requires the combined action of RDH8 and RDH12.</title>
        <authorList>
            <person name="Chen C."/>
            <person name="Thompson D.A."/>
            <person name="Koutalos Y."/>
        </authorList>
    </citation>
    <scope>FUNCTION</scope>
    <scope>DISRUPTION PHENOTYPE</scope>
</reference>
<comment type="function">
    <text evidence="2 4 5 6">Retinoids dehydrogenase/reductase with a clear preference for NADP. Displays high activity towards 9-cis, 11-cis and all-trans-retinal. Shows very weak activity toward 13-cis-retinol. Also exhibits activity, albeit with lower affinity than for retinaldehydes, towards lipid peroxidation products (C9 aldehydes) such as 4-hydroxynonenal and trans-2-nonenal (By similarity). Plays an important function in photoreceptor cells to detoxify 4-hydroxynonenal and potentially other toxic aldehyde products resulting from lipid peroxidation (PubMed:17032653, PubMed:19686838, PubMed:22621924). Has no dehydrogenase activity towards steroids (By similarity).</text>
</comment>
<comment type="catalytic activity">
    <reaction evidence="2">
        <text>all-trans-retinol + NADP(+) = all-trans-retinal + NADPH + H(+)</text>
        <dbReference type="Rhea" id="RHEA:25033"/>
        <dbReference type="ChEBI" id="CHEBI:15378"/>
        <dbReference type="ChEBI" id="CHEBI:17336"/>
        <dbReference type="ChEBI" id="CHEBI:17898"/>
        <dbReference type="ChEBI" id="CHEBI:57783"/>
        <dbReference type="ChEBI" id="CHEBI:58349"/>
        <dbReference type="EC" id="1.1.1.300"/>
    </reaction>
</comment>
<comment type="catalytic activity">
    <reaction evidence="2">
        <text>11-cis-retinol + NADP(+) = 11-cis-retinal + NADPH + H(+)</text>
        <dbReference type="Rhea" id="RHEA:54912"/>
        <dbReference type="ChEBI" id="CHEBI:15378"/>
        <dbReference type="ChEBI" id="CHEBI:16066"/>
        <dbReference type="ChEBI" id="CHEBI:16302"/>
        <dbReference type="ChEBI" id="CHEBI:57783"/>
        <dbReference type="ChEBI" id="CHEBI:58349"/>
    </reaction>
</comment>
<comment type="catalytic activity">
    <reaction evidence="2">
        <text>9-cis-retinol + NADP(+) = 9-cis-retinal + NADPH + H(+)</text>
        <dbReference type="Rhea" id="RHEA:54916"/>
        <dbReference type="ChEBI" id="CHEBI:15378"/>
        <dbReference type="ChEBI" id="CHEBI:57783"/>
        <dbReference type="ChEBI" id="CHEBI:58349"/>
        <dbReference type="ChEBI" id="CHEBI:78272"/>
        <dbReference type="ChEBI" id="CHEBI:78273"/>
    </reaction>
</comment>
<comment type="catalytic activity">
    <reaction evidence="2">
        <text>a 4-hydroxynonen-1-ol + NADP(+) = a 4-hydroxynonenal + NADPH + H(+)</text>
        <dbReference type="Rhea" id="RHEA:58336"/>
        <dbReference type="ChEBI" id="CHEBI:15378"/>
        <dbReference type="ChEBI" id="CHEBI:57783"/>
        <dbReference type="ChEBI" id="CHEBI:58349"/>
        <dbReference type="ChEBI" id="CHEBI:142593"/>
        <dbReference type="ChEBI" id="CHEBI:142606"/>
    </reaction>
</comment>
<comment type="catalytic activity">
    <reaction evidence="2">
        <text>(E)-non-2-en-1-ol + NADP(+) = (E)-non-2-enal + NADPH + H(+)</text>
        <dbReference type="Rhea" id="RHEA:58332"/>
        <dbReference type="ChEBI" id="CHEBI:15378"/>
        <dbReference type="ChEBI" id="CHEBI:57783"/>
        <dbReference type="ChEBI" id="CHEBI:58349"/>
        <dbReference type="ChEBI" id="CHEBI:142592"/>
        <dbReference type="ChEBI" id="CHEBI:142604"/>
    </reaction>
</comment>
<comment type="catalytic activity">
    <reaction evidence="2">
        <text>(Z)-non-6-en-1-ol + NADP(+) = (Z)-non-6-enal + NADPH + H(+)</text>
        <dbReference type="Rhea" id="RHEA:58328"/>
        <dbReference type="ChEBI" id="CHEBI:15378"/>
        <dbReference type="ChEBI" id="CHEBI:57783"/>
        <dbReference type="ChEBI" id="CHEBI:58349"/>
        <dbReference type="ChEBI" id="CHEBI:142591"/>
        <dbReference type="ChEBI" id="CHEBI:142603"/>
    </reaction>
</comment>
<comment type="catalytic activity">
    <reaction evidence="2">
        <text>nonan-1-ol + NADP(+) = nonanal + NADPH + H(+)</text>
        <dbReference type="Rhea" id="RHEA:58380"/>
        <dbReference type="ChEBI" id="CHEBI:15378"/>
        <dbReference type="ChEBI" id="CHEBI:35986"/>
        <dbReference type="ChEBI" id="CHEBI:57783"/>
        <dbReference type="ChEBI" id="CHEBI:58349"/>
        <dbReference type="ChEBI" id="CHEBI:84268"/>
    </reaction>
</comment>
<comment type="pathway">
    <text evidence="2">Cofactor metabolism; retinol metabolism.</text>
</comment>
<comment type="tissue specificity">
    <text evidence="3 4">Expressed in the inner segments of the photoreceptor in retina.</text>
</comment>
<comment type="disruption phenotype">
    <text evidence="4 6">Deficient mice are fertile and developed normally. Deficient mice exhibit normal retinal function at 6 weeks, but they show increased susceptibility to retinal cell apoptosis of both cone and rod photoreceptors induced by high intensity illumination (PubMed:17032653). All- trans-retinol production in inner and outer segments of the photoreceptor is not affected in deficient mice (PubMed:22621924).</text>
</comment>
<comment type="miscellaneous">
    <text evidence="2">Shows clear specificity for the pro-S hydrogen on C4 of NADPH and the pro-R hydrogen on C15 of retinols.</text>
</comment>
<comment type="similarity">
    <text evidence="7">Belongs to the short-chain dehydrogenases/reductases (SDR) family.</text>
</comment>
<sequence>MLFILVLLTSFLSILYLTAPSIRKFFAGGVCTTNVQIPGKVVVITGANTGIGKETARELARRGARVYIACRDVLKGESAASEIRADTKNSQVLVRKLDLSDTKSIRAFAERFLAEEKKLHILINNAGVMMCPYSKTTDGFETHFGVNHLGHFLLTYLLLERLKESAPARVVNLSSIAHLIGKIRFHDLQGQKRYCSAFAYGHSKLANLLFTRELAKRLQGTGVTAYAVHPGVVLSEITRNSYLLCLLWRLFSPFFKSTSQGAQTSLHCALAEDLEPLSGKYFSDCKRMWVSSRARNKKTAERLWNVSCELLGIQWE</sequence>
<accession>Q8BYK4</accession>
<accession>Q91WA5</accession>
<accession>Q9D1Y4</accession>